<protein>
    <recommendedName>
        <fullName evidence="1">4-hydroxy-3-methylbut-2-enyl diphosphate reductase</fullName>
        <shortName evidence="1">HMBPP reductase</shortName>
        <ecNumber evidence="1">1.17.7.4</ecNumber>
    </recommendedName>
</protein>
<evidence type="ECO:0000255" key="1">
    <source>
        <dbReference type="HAMAP-Rule" id="MF_00191"/>
    </source>
</evidence>
<comment type="function">
    <text evidence="1">Catalyzes the conversion of 1-hydroxy-2-methyl-2-(E)-butenyl 4-diphosphate (HMBPP) into a mixture of isopentenyl diphosphate (IPP) and dimethylallyl diphosphate (DMAPP). Acts in the terminal step of the DOXP/MEP pathway for isoprenoid precursor biosynthesis.</text>
</comment>
<comment type="catalytic activity">
    <reaction evidence="1">
        <text>isopentenyl diphosphate + 2 oxidized [2Fe-2S]-[ferredoxin] + H2O = (2E)-4-hydroxy-3-methylbut-2-enyl diphosphate + 2 reduced [2Fe-2S]-[ferredoxin] + 2 H(+)</text>
        <dbReference type="Rhea" id="RHEA:24488"/>
        <dbReference type="Rhea" id="RHEA-COMP:10000"/>
        <dbReference type="Rhea" id="RHEA-COMP:10001"/>
        <dbReference type="ChEBI" id="CHEBI:15377"/>
        <dbReference type="ChEBI" id="CHEBI:15378"/>
        <dbReference type="ChEBI" id="CHEBI:33737"/>
        <dbReference type="ChEBI" id="CHEBI:33738"/>
        <dbReference type="ChEBI" id="CHEBI:128753"/>
        <dbReference type="ChEBI" id="CHEBI:128769"/>
        <dbReference type="EC" id="1.17.7.4"/>
    </reaction>
</comment>
<comment type="catalytic activity">
    <reaction evidence="1">
        <text>dimethylallyl diphosphate + 2 oxidized [2Fe-2S]-[ferredoxin] + H2O = (2E)-4-hydroxy-3-methylbut-2-enyl diphosphate + 2 reduced [2Fe-2S]-[ferredoxin] + 2 H(+)</text>
        <dbReference type="Rhea" id="RHEA:24825"/>
        <dbReference type="Rhea" id="RHEA-COMP:10000"/>
        <dbReference type="Rhea" id="RHEA-COMP:10001"/>
        <dbReference type="ChEBI" id="CHEBI:15377"/>
        <dbReference type="ChEBI" id="CHEBI:15378"/>
        <dbReference type="ChEBI" id="CHEBI:33737"/>
        <dbReference type="ChEBI" id="CHEBI:33738"/>
        <dbReference type="ChEBI" id="CHEBI:57623"/>
        <dbReference type="ChEBI" id="CHEBI:128753"/>
        <dbReference type="EC" id="1.17.7.4"/>
    </reaction>
</comment>
<comment type="cofactor">
    <cofactor evidence="1">
        <name>[4Fe-4S] cluster</name>
        <dbReference type="ChEBI" id="CHEBI:49883"/>
    </cofactor>
    <text evidence="1">Binds 1 [4Fe-4S] cluster per subunit.</text>
</comment>
<comment type="pathway">
    <text evidence="1">Isoprenoid biosynthesis; dimethylallyl diphosphate biosynthesis; dimethylallyl diphosphate from (2E)-4-hydroxy-3-methylbutenyl diphosphate: step 1/1.</text>
</comment>
<comment type="pathway">
    <text evidence="1">Isoprenoid biosynthesis; isopentenyl diphosphate biosynthesis via DXP pathway; isopentenyl diphosphate from 1-deoxy-D-xylulose 5-phosphate: step 6/6.</text>
</comment>
<comment type="similarity">
    <text evidence="1">Belongs to the IspH family.</text>
</comment>
<feature type="chain" id="PRO_0000128775" description="4-hydroxy-3-methylbut-2-enyl diphosphate reductase">
    <location>
        <begin position="1"/>
        <end position="314"/>
    </location>
</feature>
<feature type="active site" description="Proton donor" evidence="1">
    <location>
        <position position="133"/>
    </location>
</feature>
<feature type="binding site" evidence="1">
    <location>
        <position position="12"/>
    </location>
    <ligand>
        <name>[4Fe-4S] cluster</name>
        <dbReference type="ChEBI" id="CHEBI:49883"/>
    </ligand>
</feature>
<feature type="binding site" evidence="1">
    <location>
        <position position="43"/>
    </location>
    <ligand>
        <name>(2E)-4-hydroxy-3-methylbut-2-enyl diphosphate</name>
        <dbReference type="ChEBI" id="CHEBI:128753"/>
    </ligand>
</feature>
<feature type="binding site" evidence="1">
    <location>
        <position position="43"/>
    </location>
    <ligand>
        <name>dimethylallyl diphosphate</name>
        <dbReference type="ChEBI" id="CHEBI:57623"/>
    </ligand>
</feature>
<feature type="binding site" evidence="1">
    <location>
        <position position="43"/>
    </location>
    <ligand>
        <name>isopentenyl diphosphate</name>
        <dbReference type="ChEBI" id="CHEBI:128769"/>
    </ligand>
</feature>
<feature type="binding site" evidence="1">
    <location>
        <position position="81"/>
    </location>
    <ligand>
        <name>(2E)-4-hydroxy-3-methylbut-2-enyl diphosphate</name>
        <dbReference type="ChEBI" id="CHEBI:128753"/>
    </ligand>
</feature>
<feature type="binding site" evidence="1">
    <location>
        <position position="81"/>
    </location>
    <ligand>
        <name>dimethylallyl diphosphate</name>
        <dbReference type="ChEBI" id="CHEBI:57623"/>
    </ligand>
</feature>
<feature type="binding site" evidence="1">
    <location>
        <position position="81"/>
    </location>
    <ligand>
        <name>isopentenyl diphosphate</name>
        <dbReference type="ChEBI" id="CHEBI:128769"/>
    </ligand>
</feature>
<feature type="binding site" evidence="1">
    <location>
        <position position="103"/>
    </location>
    <ligand>
        <name>[4Fe-4S] cluster</name>
        <dbReference type="ChEBI" id="CHEBI:49883"/>
    </ligand>
</feature>
<feature type="binding site" evidence="1">
    <location>
        <position position="131"/>
    </location>
    <ligand>
        <name>(2E)-4-hydroxy-3-methylbut-2-enyl diphosphate</name>
        <dbReference type="ChEBI" id="CHEBI:128753"/>
    </ligand>
</feature>
<feature type="binding site" evidence="1">
    <location>
        <position position="131"/>
    </location>
    <ligand>
        <name>dimethylallyl diphosphate</name>
        <dbReference type="ChEBI" id="CHEBI:57623"/>
    </ligand>
</feature>
<feature type="binding site" evidence="1">
    <location>
        <position position="131"/>
    </location>
    <ligand>
        <name>isopentenyl diphosphate</name>
        <dbReference type="ChEBI" id="CHEBI:128769"/>
    </ligand>
</feature>
<feature type="binding site" evidence="1">
    <location>
        <position position="170"/>
    </location>
    <ligand>
        <name>(2E)-4-hydroxy-3-methylbut-2-enyl diphosphate</name>
        <dbReference type="ChEBI" id="CHEBI:128753"/>
    </ligand>
</feature>
<feature type="binding site" evidence="1">
    <location>
        <position position="198"/>
    </location>
    <ligand>
        <name>[4Fe-4S] cluster</name>
        <dbReference type="ChEBI" id="CHEBI:49883"/>
    </ligand>
</feature>
<feature type="binding site" evidence="1">
    <location>
        <position position="226"/>
    </location>
    <ligand>
        <name>(2E)-4-hydroxy-3-methylbut-2-enyl diphosphate</name>
        <dbReference type="ChEBI" id="CHEBI:128753"/>
    </ligand>
</feature>
<feature type="binding site" evidence="1">
    <location>
        <position position="226"/>
    </location>
    <ligand>
        <name>dimethylallyl diphosphate</name>
        <dbReference type="ChEBI" id="CHEBI:57623"/>
    </ligand>
</feature>
<feature type="binding site" evidence="1">
    <location>
        <position position="226"/>
    </location>
    <ligand>
        <name>isopentenyl diphosphate</name>
        <dbReference type="ChEBI" id="CHEBI:128769"/>
    </ligand>
</feature>
<feature type="binding site" evidence="1">
    <location>
        <position position="228"/>
    </location>
    <ligand>
        <name>(2E)-4-hydroxy-3-methylbut-2-enyl diphosphate</name>
        <dbReference type="ChEBI" id="CHEBI:128753"/>
    </ligand>
</feature>
<feature type="binding site" evidence="1">
    <location>
        <position position="228"/>
    </location>
    <ligand>
        <name>dimethylallyl diphosphate</name>
        <dbReference type="ChEBI" id="CHEBI:57623"/>
    </ligand>
</feature>
<feature type="binding site" evidence="1">
    <location>
        <position position="228"/>
    </location>
    <ligand>
        <name>isopentenyl diphosphate</name>
        <dbReference type="ChEBI" id="CHEBI:128769"/>
    </ligand>
</feature>
<feature type="binding site" evidence="1">
    <location>
        <position position="271"/>
    </location>
    <ligand>
        <name>(2E)-4-hydroxy-3-methylbut-2-enyl diphosphate</name>
        <dbReference type="ChEBI" id="CHEBI:128753"/>
    </ligand>
</feature>
<feature type="binding site" evidence="1">
    <location>
        <position position="271"/>
    </location>
    <ligand>
        <name>dimethylallyl diphosphate</name>
        <dbReference type="ChEBI" id="CHEBI:57623"/>
    </ligand>
</feature>
<feature type="binding site" evidence="1">
    <location>
        <position position="271"/>
    </location>
    <ligand>
        <name>isopentenyl diphosphate</name>
        <dbReference type="ChEBI" id="CHEBI:128769"/>
    </ligand>
</feature>
<gene>
    <name evidence="1" type="primary">ispH</name>
    <name type="ordered locus">ABC1694</name>
</gene>
<dbReference type="EC" id="1.17.7.4" evidence="1"/>
<dbReference type="EMBL" id="AP006627">
    <property type="protein sequence ID" value="BAD64229.1"/>
    <property type="molecule type" value="Genomic_DNA"/>
</dbReference>
<dbReference type="RefSeq" id="WP_011246538.1">
    <property type="nucleotide sequence ID" value="NC_006582.1"/>
</dbReference>
<dbReference type="SMR" id="Q5WHC6"/>
<dbReference type="STRING" id="66692.ABC1694"/>
<dbReference type="KEGG" id="bcl:ABC1694"/>
<dbReference type="eggNOG" id="COG0761">
    <property type="taxonomic scope" value="Bacteria"/>
</dbReference>
<dbReference type="HOGENOM" id="CLU_027486_0_0_9"/>
<dbReference type="OrthoDB" id="9777362at2"/>
<dbReference type="UniPathway" id="UPA00056">
    <property type="reaction ID" value="UER00097"/>
</dbReference>
<dbReference type="UniPathway" id="UPA00059">
    <property type="reaction ID" value="UER00105"/>
</dbReference>
<dbReference type="Proteomes" id="UP000001168">
    <property type="component" value="Chromosome"/>
</dbReference>
<dbReference type="GO" id="GO:0051539">
    <property type="term" value="F:4 iron, 4 sulfur cluster binding"/>
    <property type="evidence" value="ECO:0007669"/>
    <property type="project" value="UniProtKB-UniRule"/>
</dbReference>
<dbReference type="GO" id="GO:0051745">
    <property type="term" value="F:4-hydroxy-3-methylbut-2-enyl diphosphate reductase activity"/>
    <property type="evidence" value="ECO:0007669"/>
    <property type="project" value="UniProtKB-UniRule"/>
</dbReference>
<dbReference type="GO" id="GO:0046872">
    <property type="term" value="F:metal ion binding"/>
    <property type="evidence" value="ECO:0007669"/>
    <property type="project" value="UniProtKB-KW"/>
</dbReference>
<dbReference type="GO" id="GO:0050992">
    <property type="term" value="P:dimethylallyl diphosphate biosynthetic process"/>
    <property type="evidence" value="ECO:0007669"/>
    <property type="project" value="UniProtKB-UniRule"/>
</dbReference>
<dbReference type="GO" id="GO:0019288">
    <property type="term" value="P:isopentenyl diphosphate biosynthetic process, methylerythritol 4-phosphate pathway"/>
    <property type="evidence" value="ECO:0007669"/>
    <property type="project" value="UniProtKB-UniRule"/>
</dbReference>
<dbReference type="GO" id="GO:0016114">
    <property type="term" value="P:terpenoid biosynthetic process"/>
    <property type="evidence" value="ECO:0007669"/>
    <property type="project" value="UniProtKB-UniRule"/>
</dbReference>
<dbReference type="CDD" id="cd13944">
    <property type="entry name" value="lytB_ispH"/>
    <property type="match status" value="1"/>
</dbReference>
<dbReference type="Gene3D" id="3.40.50.11270">
    <property type="match status" value="1"/>
</dbReference>
<dbReference type="Gene3D" id="3.40.1010.20">
    <property type="entry name" value="4-hydroxy-3-methylbut-2-enyl diphosphate reductase, catalytic domain"/>
    <property type="match status" value="2"/>
</dbReference>
<dbReference type="HAMAP" id="MF_00191">
    <property type="entry name" value="IspH"/>
    <property type="match status" value="1"/>
</dbReference>
<dbReference type="InterPro" id="IPR003451">
    <property type="entry name" value="LytB/IspH"/>
</dbReference>
<dbReference type="NCBIfam" id="TIGR00216">
    <property type="entry name" value="ispH_lytB"/>
    <property type="match status" value="1"/>
</dbReference>
<dbReference type="NCBIfam" id="NF002187">
    <property type="entry name" value="PRK01045.1-1"/>
    <property type="match status" value="1"/>
</dbReference>
<dbReference type="PANTHER" id="PTHR30426">
    <property type="entry name" value="4-HYDROXY-3-METHYLBUT-2-ENYL DIPHOSPHATE REDUCTASE"/>
    <property type="match status" value="1"/>
</dbReference>
<dbReference type="PANTHER" id="PTHR30426:SF0">
    <property type="entry name" value="4-HYDROXY-3-METHYLBUT-2-ENYL DIPHOSPHATE REDUCTASE"/>
    <property type="match status" value="1"/>
</dbReference>
<dbReference type="Pfam" id="PF02401">
    <property type="entry name" value="LYTB"/>
    <property type="match status" value="1"/>
</dbReference>
<reference key="1">
    <citation type="submission" date="2003-10" db="EMBL/GenBank/DDBJ databases">
        <title>The complete genome sequence of the alkaliphilic Bacillus clausii KSM-K16.</title>
        <authorList>
            <person name="Takaki Y."/>
            <person name="Kageyama Y."/>
            <person name="Shimamura S."/>
            <person name="Suzuki H."/>
            <person name="Nishi S."/>
            <person name="Hatada Y."/>
            <person name="Kawai S."/>
            <person name="Ito S."/>
            <person name="Horikoshi K."/>
        </authorList>
    </citation>
    <scope>NUCLEOTIDE SEQUENCE [LARGE SCALE GENOMIC DNA]</scope>
    <source>
        <strain>KSM-K16</strain>
    </source>
</reference>
<organism>
    <name type="scientific">Shouchella clausii (strain KSM-K16)</name>
    <name type="common">Alkalihalobacillus clausii</name>
    <dbReference type="NCBI Taxonomy" id="66692"/>
    <lineage>
        <taxon>Bacteria</taxon>
        <taxon>Bacillati</taxon>
        <taxon>Bacillota</taxon>
        <taxon>Bacilli</taxon>
        <taxon>Bacillales</taxon>
        <taxon>Bacillaceae</taxon>
        <taxon>Shouchella</taxon>
    </lineage>
</organism>
<name>ISPH_SHOC1</name>
<proteinExistence type="inferred from homology"/>
<keyword id="KW-0004">4Fe-4S</keyword>
<keyword id="KW-0408">Iron</keyword>
<keyword id="KW-0411">Iron-sulfur</keyword>
<keyword id="KW-0414">Isoprene biosynthesis</keyword>
<keyword id="KW-0479">Metal-binding</keyword>
<keyword id="KW-0560">Oxidoreductase</keyword>
<keyword id="KW-1185">Reference proteome</keyword>
<sequence>MDVLKISPRGYCYGVVDAMVMARQAAQNLDLPRPLYILGQIVHNQHVTDAFKEDGIISLDGPNRLEILKNVTHGTVIFTAHGVSPEVRRLAKEKGLTCIDATCPDVTRTHDLIREKAEEGYQFIYIGKQGHPEPEGAMGVAPDSVHLVETMEDLEQLTLDDRDIIITNQTTMSQWDVADIMKRAMELYPNAEVHNEICLATQVRQEAVAEQASQCDIVIVVGDPKSNNSNRLAQVSEQIAGTPAYRIGDLSELKLEWIKEAKKVGVTSGASTPTPITKEVITFIENYDPNDESTWDTAKKVPIEKILPKVRVKK</sequence>
<accession>Q5WHC6</accession>